<feature type="chain" id="PRO_0000135619" description="Pyridoxal 5'-phosphate synthase subunit SNO1">
    <location>
        <begin position="1"/>
        <end position="224"/>
    </location>
</feature>
<feature type="active site" description="Nucleophile" evidence="1">
    <location>
        <position position="100"/>
    </location>
</feature>
<feature type="active site" description="Charge relay system" evidence="1">
    <location>
        <position position="203"/>
    </location>
</feature>
<feature type="active site" description="Charge relay system" evidence="1">
    <location>
        <position position="205"/>
    </location>
</feature>
<feature type="binding site" evidence="1">
    <location>
        <begin position="67"/>
        <end position="69"/>
    </location>
    <ligand>
        <name>L-glutamine</name>
        <dbReference type="ChEBI" id="CHEBI:58359"/>
    </ligand>
</feature>
<feature type="binding site" evidence="1">
    <location>
        <position position="129"/>
    </location>
    <ligand>
        <name>L-glutamine</name>
        <dbReference type="ChEBI" id="CHEBI:58359"/>
    </ligand>
</feature>
<feature type="binding site" evidence="1">
    <location>
        <begin position="160"/>
        <end position="161"/>
    </location>
    <ligand>
        <name>L-glutamine</name>
        <dbReference type="ChEBI" id="CHEBI:58359"/>
    </ligand>
</feature>
<gene>
    <name type="primary">SNO1</name>
    <name type="ordered locus">YMR095C</name>
    <name type="ORF">YM6543.02C</name>
</gene>
<evidence type="ECO:0000250" key="1">
    <source>
        <dbReference type="UniProtKB" id="P37528"/>
    </source>
</evidence>
<evidence type="ECO:0000269" key="2">
    <source>
    </source>
</evidence>
<evidence type="ECO:0000305" key="3"/>
<name>SNO1_YEAST</name>
<organism>
    <name type="scientific">Saccharomyces cerevisiae (strain ATCC 204508 / S288c)</name>
    <name type="common">Baker's yeast</name>
    <dbReference type="NCBI Taxonomy" id="559292"/>
    <lineage>
        <taxon>Eukaryota</taxon>
        <taxon>Fungi</taxon>
        <taxon>Dikarya</taxon>
        <taxon>Ascomycota</taxon>
        <taxon>Saccharomycotina</taxon>
        <taxon>Saccharomycetes</taxon>
        <taxon>Saccharomycetales</taxon>
        <taxon>Saccharomycetaceae</taxon>
        <taxon>Saccharomyces</taxon>
    </lineage>
</organism>
<proteinExistence type="evidence at protein level"/>
<dbReference type="EC" id="4.3.3.6"/>
<dbReference type="EC" id="3.5.1.2" evidence="2"/>
<dbReference type="EMBL" id="Z49807">
    <property type="protein sequence ID" value="CAA89896.1"/>
    <property type="molecule type" value="Genomic_DNA"/>
</dbReference>
<dbReference type="EMBL" id="AY692745">
    <property type="protein sequence ID" value="AAT92764.1"/>
    <property type="molecule type" value="Genomic_DNA"/>
</dbReference>
<dbReference type="EMBL" id="BK006946">
    <property type="protein sequence ID" value="DAA09992.1"/>
    <property type="molecule type" value="Genomic_DNA"/>
</dbReference>
<dbReference type="PIR" id="S55081">
    <property type="entry name" value="S55081"/>
</dbReference>
<dbReference type="RefSeq" id="NP_013813.1">
    <property type="nucleotide sequence ID" value="NM_001182595.1"/>
</dbReference>
<dbReference type="SMR" id="Q03144"/>
<dbReference type="BioGRID" id="35270">
    <property type="interactions" value="59"/>
</dbReference>
<dbReference type="ComplexPortal" id="CPX-1370">
    <property type="entry name" value="SNO1-SNZ1 pyridoxal 5'-phosphate synthase complex"/>
</dbReference>
<dbReference type="DIP" id="DIP-1642N"/>
<dbReference type="FunCoup" id="Q03144">
    <property type="interactions" value="198"/>
</dbReference>
<dbReference type="IntAct" id="Q03144">
    <property type="interactions" value="10"/>
</dbReference>
<dbReference type="MINT" id="Q03144"/>
<dbReference type="STRING" id="4932.YMR095C"/>
<dbReference type="MEROPS" id="C26.A32"/>
<dbReference type="PaxDb" id="4932-YMR095C"/>
<dbReference type="PeptideAtlas" id="Q03144"/>
<dbReference type="EnsemblFungi" id="YMR095C_mRNA">
    <property type="protein sequence ID" value="YMR095C"/>
    <property type="gene ID" value="YMR095C"/>
</dbReference>
<dbReference type="GeneID" id="855120"/>
<dbReference type="KEGG" id="sce:YMR095C"/>
<dbReference type="AGR" id="SGD:S000004701"/>
<dbReference type="SGD" id="S000004701">
    <property type="gene designation" value="SNO1"/>
</dbReference>
<dbReference type="VEuPathDB" id="FungiDB:YMR095C"/>
<dbReference type="eggNOG" id="KOG3210">
    <property type="taxonomic scope" value="Eukaryota"/>
</dbReference>
<dbReference type="GeneTree" id="ENSGT00390000011516"/>
<dbReference type="HOGENOM" id="CLU_069674_0_1_1"/>
<dbReference type="InParanoid" id="Q03144"/>
<dbReference type="OMA" id="GMIMLAD"/>
<dbReference type="OrthoDB" id="2039at2759"/>
<dbReference type="BioCyc" id="MetaCyc:G3O-32795-MONOMER"/>
<dbReference type="BioCyc" id="YEAST:G3O-32795-MONOMER"/>
<dbReference type="SABIO-RK" id="Q03144"/>
<dbReference type="UniPathway" id="UPA00245"/>
<dbReference type="BioGRID-ORCS" id="855120">
    <property type="hits" value="5 hits in 10 CRISPR screens"/>
</dbReference>
<dbReference type="PRO" id="PR:Q03144"/>
<dbReference type="Proteomes" id="UP000002311">
    <property type="component" value="Chromosome XIII"/>
</dbReference>
<dbReference type="RNAct" id="Q03144">
    <property type="molecule type" value="protein"/>
</dbReference>
<dbReference type="GO" id="GO:0005737">
    <property type="term" value="C:cytoplasm"/>
    <property type="evidence" value="ECO:0007005"/>
    <property type="project" value="SGD"/>
</dbReference>
<dbReference type="GO" id="GO:0005829">
    <property type="term" value="C:cytosol"/>
    <property type="evidence" value="ECO:0000318"/>
    <property type="project" value="GO_Central"/>
</dbReference>
<dbReference type="GO" id="GO:1903600">
    <property type="term" value="C:glutaminase complex"/>
    <property type="evidence" value="ECO:0000353"/>
    <property type="project" value="ComplexPortal"/>
</dbReference>
<dbReference type="GO" id="GO:0004359">
    <property type="term" value="F:glutaminase activity"/>
    <property type="evidence" value="ECO:0007669"/>
    <property type="project" value="UniProtKB-EC"/>
</dbReference>
<dbReference type="GO" id="GO:0036381">
    <property type="term" value="F:pyridoxal 5'-phosphate synthase (glutamine hydrolysing) activity"/>
    <property type="evidence" value="ECO:0007669"/>
    <property type="project" value="UniProtKB-EC"/>
</dbReference>
<dbReference type="GO" id="GO:0036001">
    <property type="term" value="P:'de novo' pyridoxal 5'-phosphate biosynthetic process"/>
    <property type="evidence" value="ECO:0000315"/>
    <property type="project" value="SGD"/>
</dbReference>
<dbReference type="GO" id="GO:0006543">
    <property type="term" value="P:glutamine catabolic process"/>
    <property type="evidence" value="ECO:0000314"/>
    <property type="project" value="ComplexPortal"/>
</dbReference>
<dbReference type="GO" id="GO:0043066">
    <property type="term" value="P:negative regulation of apoptotic process"/>
    <property type="evidence" value="ECO:0000315"/>
    <property type="project" value="SGD"/>
</dbReference>
<dbReference type="GO" id="GO:0042823">
    <property type="term" value="P:pyridoxal phosphate biosynthetic process"/>
    <property type="evidence" value="ECO:0000314"/>
    <property type="project" value="ComplexPortal"/>
</dbReference>
<dbReference type="GO" id="GO:0008615">
    <property type="term" value="P:pyridoxine biosynthetic process"/>
    <property type="evidence" value="ECO:0000316"/>
    <property type="project" value="SGD"/>
</dbReference>
<dbReference type="GO" id="GO:0008614">
    <property type="term" value="P:pyridoxine metabolic process"/>
    <property type="evidence" value="ECO:0000318"/>
    <property type="project" value="GO_Central"/>
</dbReference>
<dbReference type="GO" id="GO:0042819">
    <property type="term" value="P:vitamin B6 biosynthetic process"/>
    <property type="evidence" value="ECO:0000315"/>
    <property type="project" value="SGD"/>
</dbReference>
<dbReference type="CDD" id="cd01749">
    <property type="entry name" value="GATase1_PB"/>
    <property type="match status" value="1"/>
</dbReference>
<dbReference type="FunFam" id="3.40.50.880:FF:000042">
    <property type="entry name" value="Pyridoxine 2"/>
    <property type="match status" value="1"/>
</dbReference>
<dbReference type="Gene3D" id="3.40.50.880">
    <property type="match status" value="1"/>
</dbReference>
<dbReference type="InterPro" id="IPR029062">
    <property type="entry name" value="Class_I_gatase-like"/>
</dbReference>
<dbReference type="InterPro" id="IPR002161">
    <property type="entry name" value="PdxT/SNO"/>
</dbReference>
<dbReference type="InterPro" id="IPR021196">
    <property type="entry name" value="PdxT/SNO_CS"/>
</dbReference>
<dbReference type="NCBIfam" id="TIGR03800">
    <property type="entry name" value="PLP_synth_Pdx2"/>
    <property type="match status" value="1"/>
</dbReference>
<dbReference type="PANTHER" id="PTHR31559">
    <property type="entry name" value="PYRIDOXAL 5'-PHOSPHATE SYNTHASE SUBUNIT SNO"/>
    <property type="match status" value="1"/>
</dbReference>
<dbReference type="PANTHER" id="PTHR31559:SF0">
    <property type="entry name" value="PYRIDOXAL 5'-PHOSPHATE SYNTHASE SUBUNIT SNO1-RELATED"/>
    <property type="match status" value="1"/>
</dbReference>
<dbReference type="Pfam" id="PF01174">
    <property type="entry name" value="SNO"/>
    <property type="match status" value="1"/>
</dbReference>
<dbReference type="PIRSF" id="PIRSF005639">
    <property type="entry name" value="Glut_amidoT_SNO"/>
    <property type="match status" value="1"/>
</dbReference>
<dbReference type="SUPFAM" id="SSF52317">
    <property type="entry name" value="Class I glutamine amidotransferase-like"/>
    <property type="match status" value="1"/>
</dbReference>
<dbReference type="PROSITE" id="PS01236">
    <property type="entry name" value="PDXT_SNO_1"/>
    <property type="match status" value="1"/>
</dbReference>
<dbReference type="PROSITE" id="PS51130">
    <property type="entry name" value="PDXT_SNO_2"/>
    <property type="match status" value="1"/>
</dbReference>
<reference key="1">
    <citation type="journal article" date="1997" name="Nature">
        <title>The nucleotide sequence of Saccharomyces cerevisiae chromosome XIII.</title>
        <authorList>
            <person name="Bowman S."/>
            <person name="Churcher C.M."/>
            <person name="Badcock K."/>
            <person name="Brown D."/>
            <person name="Chillingworth T."/>
            <person name="Connor R."/>
            <person name="Dedman K."/>
            <person name="Devlin K."/>
            <person name="Gentles S."/>
            <person name="Hamlin N."/>
            <person name="Hunt S."/>
            <person name="Jagels K."/>
            <person name="Lye G."/>
            <person name="Moule S."/>
            <person name="Odell C."/>
            <person name="Pearson D."/>
            <person name="Rajandream M.A."/>
            <person name="Rice P."/>
            <person name="Skelton J."/>
            <person name="Walsh S.V."/>
            <person name="Whitehead S."/>
            <person name="Barrell B.G."/>
        </authorList>
    </citation>
    <scope>NUCLEOTIDE SEQUENCE [LARGE SCALE GENOMIC DNA]</scope>
    <source>
        <strain>ATCC 204508 / S288c</strain>
    </source>
</reference>
<reference key="2">
    <citation type="journal article" date="2014" name="G3 (Bethesda)">
        <title>The reference genome sequence of Saccharomyces cerevisiae: Then and now.</title>
        <authorList>
            <person name="Engel S.R."/>
            <person name="Dietrich F.S."/>
            <person name="Fisk D.G."/>
            <person name="Binkley G."/>
            <person name="Balakrishnan R."/>
            <person name="Costanzo M.C."/>
            <person name="Dwight S.S."/>
            <person name="Hitz B.C."/>
            <person name="Karra K."/>
            <person name="Nash R.S."/>
            <person name="Weng S."/>
            <person name="Wong E.D."/>
            <person name="Lloyd P."/>
            <person name="Skrzypek M.S."/>
            <person name="Miyasato S.R."/>
            <person name="Simison M."/>
            <person name="Cherry J.M."/>
        </authorList>
    </citation>
    <scope>GENOME REANNOTATION</scope>
    <source>
        <strain>ATCC 204508 / S288c</strain>
    </source>
</reference>
<reference key="3">
    <citation type="journal article" date="2007" name="Genome Res.">
        <title>Approaching a complete repository of sequence-verified protein-encoding clones for Saccharomyces cerevisiae.</title>
        <authorList>
            <person name="Hu Y."/>
            <person name="Rolfs A."/>
            <person name="Bhullar B."/>
            <person name="Murthy T.V.S."/>
            <person name="Zhu C."/>
            <person name="Berger M.F."/>
            <person name="Camargo A.A."/>
            <person name="Kelley F."/>
            <person name="McCarron S."/>
            <person name="Jepson D."/>
            <person name="Richardson A."/>
            <person name="Raphael J."/>
            <person name="Moreira D."/>
            <person name="Taycher E."/>
            <person name="Zuo D."/>
            <person name="Mohr S."/>
            <person name="Kane M.F."/>
            <person name="Williamson J."/>
            <person name="Simpson A.J.G."/>
            <person name="Bulyk M.L."/>
            <person name="Harlow E."/>
            <person name="Marsischky G."/>
            <person name="Kolodner R.D."/>
            <person name="LaBaer J."/>
        </authorList>
    </citation>
    <scope>NUCLEOTIDE SEQUENCE [GENOMIC DNA]</scope>
    <source>
        <strain>ATCC 204508 / S288c</strain>
    </source>
</reference>
<reference key="4">
    <citation type="journal article" date="2004" name="Eur. J. Biochem.">
        <title>Characterization of the products of the genes SNO1 and SNZ1 involved in pyridoxine synthesis in Saccharomyces cerevisiae.</title>
        <authorList>
            <person name="Dong Y.X."/>
            <person name="Sueda S."/>
            <person name="Nikawa J."/>
            <person name="Kondo H."/>
        </authorList>
    </citation>
    <scope>PROTEIN SEQUENCE OF 1-9</scope>
    <scope>FUNCTION AS GLUTAMINASE</scope>
    <scope>CATALYTIC ACTIVITY</scope>
    <scope>BIOPHYSICOCHEMICAL PROPERTIES</scope>
</reference>
<reference key="5">
    <citation type="journal article" date="2002" name="Yeast">
        <title>Functional analysis of yeast gene families involved in metabolism of vitamins B1 and B6.</title>
        <authorList>
            <person name="Rodriguez-Navarro S."/>
            <person name="Llorente B."/>
            <person name="Rodriguez-Manzaneque M.T."/>
            <person name="Ramne A."/>
            <person name="Uber G."/>
            <person name="Marchesan D."/>
            <person name="Dujon B."/>
            <person name="Herrero E."/>
            <person name="Sunnerhagen P."/>
            <person name="Perez-Ortin J.E."/>
        </authorList>
    </citation>
    <scope>FUNCTION</scope>
</reference>
<accession>Q03144</accession>
<accession>D6VZR8</accession>
<keyword id="KW-0903">Direct protein sequencing</keyword>
<keyword id="KW-0315">Glutamine amidotransferase</keyword>
<keyword id="KW-0378">Hydrolase</keyword>
<keyword id="KW-0456">Lyase</keyword>
<keyword id="KW-0663">Pyridoxal phosphate</keyword>
<keyword id="KW-1185">Reference proteome</keyword>
<comment type="function">
    <text evidence="3">Catalyzes the hydrolysis of glutamine to glutamate and ammonia as part of the biosynthesis of pyridoxal 5'-phosphate. The resulting ammonia molecule is channeled to the active site of a SNZ isoform.</text>
</comment>
<comment type="catalytic activity">
    <reaction evidence="3">
        <text>aldehydo-D-ribose 5-phosphate + D-glyceraldehyde 3-phosphate + L-glutamine = pyridoxal 5'-phosphate + L-glutamate + phosphate + 3 H2O + H(+)</text>
        <dbReference type="Rhea" id="RHEA:31507"/>
        <dbReference type="ChEBI" id="CHEBI:15377"/>
        <dbReference type="ChEBI" id="CHEBI:15378"/>
        <dbReference type="ChEBI" id="CHEBI:29985"/>
        <dbReference type="ChEBI" id="CHEBI:43474"/>
        <dbReference type="ChEBI" id="CHEBI:58273"/>
        <dbReference type="ChEBI" id="CHEBI:58359"/>
        <dbReference type="ChEBI" id="CHEBI:59776"/>
        <dbReference type="ChEBI" id="CHEBI:597326"/>
        <dbReference type="EC" id="4.3.3.6"/>
    </reaction>
</comment>
<comment type="catalytic activity">
    <reaction evidence="2">
        <text>L-glutamine + H2O = L-glutamate + NH4(+)</text>
        <dbReference type="Rhea" id="RHEA:15889"/>
        <dbReference type="ChEBI" id="CHEBI:15377"/>
        <dbReference type="ChEBI" id="CHEBI:28938"/>
        <dbReference type="ChEBI" id="CHEBI:29985"/>
        <dbReference type="ChEBI" id="CHEBI:58359"/>
        <dbReference type="EC" id="3.5.1.2"/>
    </reaction>
</comment>
<comment type="biophysicochemical properties">
    <kinetics>
        <KM evidence="2">3.4 mM for glutamine</KM>
        <Vmax evidence="2">0.48 umol/min/mg enzyme with glutamine as substrate</Vmax>
    </kinetics>
</comment>
<comment type="pathway">
    <text evidence="3">Cofactor biosynthesis; pyridoxal 5'-phosphate biosynthesis.</text>
</comment>
<comment type="interaction">
    <interactant intactId="EBI-28190">
        <id>Q03144</id>
    </interactant>
    <interactant intactId="EBI-17618">
        <id>Q03148</id>
        <label>SNZ1</label>
    </interactant>
    <organismsDiffer>false</organismsDiffer>
    <experiments>4</experiments>
</comment>
<comment type="similarity">
    <text evidence="3">Belongs to the glutaminase PdxT/SNO family.</text>
</comment>
<sequence>MHKTHSTMSGKSMKVIGVLALQGAFLEHTNHLKRCLAENDYGIKIEIKTVKTPEDLAQCDALIIPGGESTSMSLIAQRTGLYPCLYEFVHNPEKVVWGTCAGLIFLSAQLENESALVKTLGVLKVDVRRNAFGRQAQSFTQKCDFSNFIPGCDNFPATFIRAPVIERILDPIAVKSLYELPVNGKDVVVAATQNHNILVTSFHPELADSDTRFHDWFIRQFVSN</sequence>
<protein>
    <recommendedName>
        <fullName>Pyridoxal 5'-phosphate synthase subunit SNO1</fullName>
        <ecNumber>4.3.3.6</ecNumber>
    </recommendedName>
    <alternativeName>
        <fullName>PDX2 homolog 1</fullName>
        <shortName>Pdx2.1</shortName>
    </alternativeName>
    <alternativeName>
        <fullName>Pyridoxal 5'-phosphate synthase glutaminase subunit</fullName>
        <ecNumber evidence="2">3.5.1.2</ecNumber>
    </alternativeName>
</protein>